<proteinExistence type="evidence at protein level"/>
<accession>P9WJ85</accession>
<accession>L0TA24</accession>
<accession>Q79FI0</accession>
<accession>Q8VJR2</accession>
<reference key="1">
    <citation type="journal article" date="1998" name="Nature">
        <title>Deciphering the biology of Mycobacterium tuberculosis from the complete genome sequence.</title>
        <authorList>
            <person name="Cole S.T."/>
            <person name="Brosch R."/>
            <person name="Parkhill J."/>
            <person name="Garnier T."/>
            <person name="Churcher C.M."/>
            <person name="Harris D.E."/>
            <person name="Gordon S.V."/>
            <person name="Eiglmeier K."/>
            <person name="Gas S."/>
            <person name="Barry C.E. III"/>
            <person name="Tekaia F."/>
            <person name="Badcock K."/>
            <person name="Basham D."/>
            <person name="Brown D."/>
            <person name="Chillingworth T."/>
            <person name="Connor R."/>
            <person name="Davies R.M."/>
            <person name="Devlin K."/>
            <person name="Feltwell T."/>
            <person name="Gentles S."/>
            <person name="Hamlin N."/>
            <person name="Holroyd S."/>
            <person name="Hornsby T."/>
            <person name="Jagels K."/>
            <person name="Krogh A."/>
            <person name="McLean J."/>
            <person name="Moule S."/>
            <person name="Murphy L.D."/>
            <person name="Oliver S."/>
            <person name="Osborne J."/>
            <person name="Quail M.A."/>
            <person name="Rajandream M.A."/>
            <person name="Rogers J."/>
            <person name="Rutter S."/>
            <person name="Seeger K."/>
            <person name="Skelton S."/>
            <person name="Squares S."/>
            <person name="Squares R."/>
            <person name="Sulston J.E."/>
            <person name="Taylor K."/>
            <person name="Whitehead S."/>
            <person name="Barrell B.G."/>
        </authorList>
    </citation>
    <scope>NUCLEOTIDE SEQUENCE [LARGE SCALE GENOMIC DNA]</scope>
    <source>
        <strain>ATCC 25618 / H37Rv</strain>
    </source>
</reference>
<reference key="2">
    <citation type="journal article" date="2005" name="Nucleic Acids Res.">
        <title>Toxin-antitoxin loci are highly abundant in free-living but lost from host-associated prokaryotes.</title>
        <authorList>
            <person name="Pandey D.P."/>
            <person name="Gerdes K."/>
        </authorList>
    </citation>
    <scope>IDENTIFICATION</scope>
    <scope>POSSIBLE FUNCTION</scope>
    <source>
        <strain>ATCC 25618 / H37Rv</strain>
    </source>
</reference>
<reference key="3">
    <citation type="journal article" date="2009" name="FEMS Microbiol. Lett.">
        <title>Killing activity and rescue function of genome-wide toxin-antitoxin loci of Mycobacterium tuberculosis.</title>
        <authorList>
            <person name="Gupta A."/>
        </authorList>
    </citation>
    <scope>EXPRESSION IN E.COLI</scope>
    <scope>FUNCTION AS AN ANTITOXIN</scope>
    <source>
        <strain>ATCC 25618 / H37Rv</strain>
    </source>
</reference>
<reference key="4">
    <citation type="journal article" date="2009" name="PLoS Genet.">
        <title>Comprehensive functional analysis of Mycobacterium tuberculosis toxin-antitoxin systems: implications for pathogenesis, stress responses, and evolution.</title>
        <authorList>
            <person name="Ramage H.R."/>
            <person name="Connolly L.E."/>
            <person name="Cox J.S."/>
        </authorList>
    </citation>
    <scope>EXPRESSION IN M.SMEGMATIS</scope>
    <scope>LACK OF FUNCTION AS AN ANTITOXIN</scope>
    <source>
        <strain>ATCC 35801 / TMC 107 / Erdman</strain>
    </source>
</reference>
<reference key="5">
    <citation type="journal article" date="2011" name="Mol. Cell. Proteomics">
        <title>Proteogenomic analysis of Mycobacterium tuberculosis by high resolution mass spectrometry.</title>
        <authorList>
            <person name="Kelkar D.S."/>
            <person name="Kumar D."/>
            <person name="Kumar P."/>
            <person name="Balakrishnan L."/>
            <person name="Muthusamy B."/>
            <person name="Yadav A.K."/>
            <person name="Shrivastava P."/>
            <person name="Marimuthu A."/>
            <person name="Anand S."/>
            <person name="Sundaram H."/>
            <person name="Kingsbury R."/>
            <person name="Harsha H.C."/>
            <person name="Nair B."/>
            <person name="Prasad T.S."/>
            <person name="Chauhan D.S."/>
            <person name="Katoch K."/>
            <person name="Katoch V.M."/>
            <person name="Kumar P."/>
            <person name="Chaerkady R."/>
            <person name="Ramachandran S."/>
            <person name="Dash D."/>
            <person name="Pandey A."/>
        </authorList>
    </citation>
    <scope>IDENTIFICATION BY MASS SPECTROMETRY [LARGE SCALE ANALYSIS]</scope>
    <source>
        <strain>ATCC 25618 / H37Rv</strain>
    </source>
</reference>
<comment type="function">
    <text evidence="3">Antitoxin component of a type II toxin-antitoxin (TA) system. Upon expression in E.coli but not in M.smegmatis neutralizes the effect of cognate toxin MazF7.</text>
</comment>
<comment type="subunit">
    <text evidence="1">Forms a complex with cognate toxin MazF7.</text>
</comment>
<name>MAZE7_MYCTU</name>
<protein>
    <recommendedName>
        <fullName evidence="4">Antitoxin MazE7</fullName>
    </recommendedName>
</protein>
<gene>
    <name type="primary">mazE7</name>
    <name type="ordered locus">Rv2063</name>
</gene>
<dbReference type="EMBL" id="AL123456">
    <property type="protein sequence ID" value="CCP44836.1"/>
    <property type="molecule type" value="Genomic_DNA"/>
</dbReference>
<dbReference type="RefSeq" id="WP_003410651.1">
    <property type="nucleotide sequence ID" value="NZ_NVQJ01000047.1"/>
</dbReference>
<dbReference type="RefSeq" id="YP_177657.1">
    <property type="nucleotide sequence ID" value="NC_000962.3"/>
</dbReference>
<dbReference type="PDB" id="6A6X">
    <property type="method" value="X-ray"/>
    <property type="resolution" value="2.70 A"/>
    <property type="chains" value="C/D=1-77"/>
</dbReference>
<dbReference type="PDB" id="7DU4">
    <property type="method" value="X-ray"/>
    <property type="resolution" value="2.18 A"/>
    <property type="chains" value="Q=63-77"/>
</dbReference>
<dbReference type="PDBsum" id="6A6X"/>
<dbReference type="PDBsum" id="7DU4"/>
<dbReference type="SMR" id="P9WJ85"/>
<dbReference type="STRING" id="83332.Rv2063"/>
<dbReference type="PaxDb" id="83332-Rv2063"/>
<dbReference type="DNASU" id="3205116"/>
<dbReference type="GeneID" id="3205116"/>
<dbReference type="KEGG" id="mtu:Rv2063"/>
<dbReference type="KEGG" id="mtv:RVBD_2063"/>
<dbReference type="TubercuList" id="Rv2063"/>
<dbReference type="InParanoid" id="P9WJ85"/>
<dbReference type="OrthoDB" id="4752417at2"/>
<dbReference type="Proteomes" id="UP000001584">
    <property type="component" value="Chromosome"/>
</dbReference>
<dbReference type="GO" id="GO:0003677">
    <property type="term" value="F:DNA binding"/>
    <property type="evidence" value="ECO:0007669"/>
    <property type="project" value="UniProtKB-KW"/>
</dbReference>
<dbReference type="GO" id="GO:0098754">
    <property type="term" value="P:detoxification"/>
    <property type="evidence" value="ECO:0000315"/>
    <property type="project" value="MTBBASE"/>
</dbReference>
<dbReference type="GO" id="GO:0045927">
    <property type="term" value="P:positive regulation of growth"/>
    <property type="evidence" value="ECO:0000315"/>
    <property type="project" value="MTBBASE"/>
</dbReference>
<evidence type="ECO:0000250" key="1">
    <source>
        <dbReference type="UniProtKB" id="O53451"/>
    </source>
</evidence>
<evidence type="ECO:0000256" key="2">
    <source>
        <dbReference type="SAM" id="MobiDB-lite"/>
    </source>
</evidence>
<evidence type="ECO:0000269" key="3">
    <source>
    </source>
</evidence>
<evidence type="ECO:0000305" key="4"/>
<evidence type="ECO:0007829" key="5">
    <source>
        <dbReference type="PDB" id="6A6X"/>
    </source>
</evidence>
<evidence type="ECO:0007829" key="6">
    <source>
        <dbReference type="PDB" id="7DU4"/>
    </source>
</evidence>
<feature type="chain" id="PRO_0000406301" description="Antitoxin MazE7">
    <location>
        <begin position="1"/>
        <end position="77"/>
    </location>
</feature>
<feature type="region of interest" description="Disordered" evidence="2">
    <location>
        <begin position="49"/>
        <end position="77"/>
    </location>
</feature>
<feature type="strand" evidence="5">
    <location>
        <begin position="4"/>
        <end position="10"/>
    </location>
</feature>
<feature type="helix" evidence="5">
    <location>
        <begin position="11"/>
        <end position="23"/>
    </location>
</feature>
<feature type="helix" evidence="5">
    <location>
        <begin position="28"/>
        <end position="57"/>
    </location>
</feature>
<feature type="helix" evidence="5">
    <location>
        <begin position="59"/>
        <end position="68"/>
    </location>
</feature>
<feature type="helix" evidence="6">
    <location>
        <begin position="69"/>
        <end position="71"/>
    </location>
</feature>
<feature type="turn" evidence="6">
    <location>
        <begin position="72"/>
        <end position="75"/>
    </location>
</feature>
<sequence>MSTSTTIRVSTQTRDRLAAQARERGISMSALLTELAAQAERQAIFRAEREASHAETTTQAVRDEDREWEGTVGDGLG</sequence>
<organism>
    <name type="scientific">Mycobacterium tuberculosis (strain ATCC 25618 / H37Rv)</name>
    <dbReference type="NCBI Taxonomy" id="83332"/>
    <lineage>
        <taxon>Bacteria</taxon>
        <taxon>Bacillati</taxon>
        <taxon>Actinomycetota</taxon>
        <taxon>Actinomycetes</taxon>
        <taxon>Mycobacteriales</taxon>
        <taxon>Mycobacteriaceae</taxon>
        <taxon>Mycobacterium</taxon>
        <taxon>Mycobacterium tuberculosis complex</taxon>
    </lineage>
</organism>
<keyword id="KW-0002">3D-structure</keyword>
<keyword id="KW-0238">DNA-binding</keyword>
<keyword id="KW-1185">Reference proteome</keyword>
<keyword id="KW-1277">Toxin-antitoxin system</keyword>